<protein>
    <recommendedName>
        <fullName>Inner kinetochore subunit cnl2</fullName>
    </recommendedName>
    <alternativeName>
        <fullName>Centromere-localized protein 2</fullName>
    </alternativeName>
    <alternativeName>
        <fullName>Constitutive centromere-associated network protein cnl2</fullName>
    </alternativeName>
</protein>
<accession>O13952</accession>
<evidence type="ECO:0000250" key="1">
    <source>
        <dbReference type="UniProtKB" id="Q12493"/>
    </source>
</evidence>
<evidence type="ECO:0000269" key="2">
    <source>
    </source>
</evidence>
<evidence type="ECO:0000305" key="3"/>
<gene>
    <name type="primary">cnl2</name>
    <name type="ORF">SPAC23H4.11c</name>
</gene>
<sequence length="188" mass="21922">MNMEEQILNDYLLSQGRLQSIISLEQWRQLFPQRYREDPLIERLYEYCTQQRQKRLAKLRANIHLESQVIGKSRIDRMLATNVEKLQTVSHASTLHDVEEFYTSHSAKPLDISEINERLSEAVQSAYTKLNEEKERCTQLTLKMNSQIASLSDFQWSKEPNVDESIHLVESLIESLEKAAPSAIEELD</sequence>
<name>NKP2_SCHPO</name>
<feature type="chain" id="PRO_0000351434" description="Inner kinetochore subunit cnl2">
    <location>
        <begin position="1"/>
        <end position="188"/>
    </location>
</feature>
<comment type="function">
    <text evidence="2">Component of the kinetochore, a multiprotein complex that assembles on centromeric DNA and attaches chromosomes to spindle microtubules, mediating chromosome segregation and sister chromatid segregation during meiosis and mitosis. Component of the inner kinetochore constitutive centromere-associated network (CCAN), which serves as a structural platform for outer kinetochore assembly.</text>
</comment>
<comment type="subunit">
    <text evidence="1">Component of the inner kinetochore constitutive centromere-associated network (CCAN) (also known as central kinetochore Sim4 complex in fission yeast), which is composed of at least cnl2, cnp3, cnp20, fta1, fta2, fta3, fta4, fta6, fta7, mal2, mhf1, mhf2, mis6, mis15, mis17, sim4 and wip1.</text>
</comment>
<comment type="subcellular location">
    <subcellularLocation>
        <location>Cytoplasm</location>
    </subcellularLocation>
    <subcellularLocation>
        <location>Nucleus</location>
    </subcellularLocation>
    <subcellularLocation>
        <location>Chromosome</location>
        <location>Centromere</location>
        <location>Kinetochore</location>
    </subcellularLocation>
    <text>Localized at the central region, but not at the outer repeats, of the centromere and remains at the centromere during mitosis and meiosis.</text>
</comment>
<comment type="similarity">
    <text evidence="3">Belongs to the NKP2 family.</text>
</comment>
<proteinExistence type="inferred from homology"/>
<keyword id="KW-0131">Cell cycle</keyword>
<keyword id="KW-0132">Cell division</keyword>
<keyword id="KW-0137">Centromere</keyword>
<keyword id="KW-0158">Chromosome</keyword>
<keyword id="KW-0159">Chromosome partition</keyword>
<keyword id="KW-0963">Cytoplasm</keyword>
<keyword id="KW-0995">Kinetochore</keyword>
<keyword id="KW-0539">Nucleus</keyword>
<keyword id="KW-1185">Reference proteome</keyword>
<organism>
    <name type="scientific">Schizosaccharomyces pombe (strain 972 / ATCC 24843)</name>
    <name type="common">Fission yeast</name>
    <dbReference type="NCBI Taxonomy" id="284812"/>
    <lineage>
        <taxon>Eukaryota</taxon>
        <taxon>Fungi</taxon>
        <taxon>Dikarya</taxon>
        <taxon>Ascomycota</taxon>
        <taxon>Taphrinomycotina</taxon>
        <taxon>Schizosaccharomycetes</taxon>
        <taxon>Schizosaccharomycetales</taxon>
        <taxon>Schizosaccharomycetaceae</taxon>
        <taxon>Schizosaccharomyces</taxon>
    </lineage>
</organism>
<reference key="1">
    <citation type="journal article" date="2002" name="Nature">
        <title>The genome sequence of Schizosaccharomyces pombe.</title>
        <authorList>
            <person name="Wood V."/>
            <person name="Gwilliam R."/>
            <person name="Rajandream M.A."/>
            <person name="Lyne M.H."/>
            <person name="Lyne R."/>
            <person name="Stewart A."/>
            <person name="Sgouros J.G."/>
            <person name="Peat N."/>
            <person name="Hayles J."/>
            <person name="Baker S.G."/>
            <person name="Basham D."/>
            <person name="Bowman S."/>
            <person name="Brooks K."/>
            <person name="Brown D."/>
            <person name="Brown S."/>
            <person name="Chillingworth T."/>
            <person name="Churcher C.M."/>
            <person name="Collins M."/>
            <person name="Connor R."/>
            <person name="Cronin A."/>
            <person name="Davis P."/>
            <person name="Feltwell T."/>
            <person name="Fraser A."/>
            <person name="Gentles S."/>
            <person name="Goble A."/>
            <person name="Hamlin N."/>
            <person name="Harris D.E."/>
            <person name="Hidalgo J."/>
            <person name="Hodgson G."/>
            <person name="Holroyd S."/>
            <person name="Hornsby T."/>
            <person name="Howarth S."/>
            <person name="Huckle E.J."/>
            <person name="Hunt S."/>
            <person name="Jagels K."/>
            <person name="James K.D."/>
            <person name="Jones L."/>
            <person name="Jones M."/>
            <person name="Leather S."/>
            <person name="McDonald S."/>
            <person name="McLean J."/>
            <person name="Mooney P."/>
            <person name="Moule S."/>
            <person name="Mungall K.L."/>
            <person name="Murphy L.D."/>
            <person name="Niblett D."/>
            <person name="Odell C."/>
            <person name="Oliver K."/>
            <person name="O'Neil S."/>
            <person name="Pearson D."/>
            <person name="Quail M.A."/>
            <person name="Rabbinowitsch E."/>
            <person name="Rutherford K.M."/>
            <person name="Rutter S."/>
            <person name="Saunders D."/>
            <person name="Seeger K."/>
            <person name="Sharp S."/>
            <person name="Skelton J."/>
            <person name="Simmonds M.N."/>
            <person name="Squares R."/>
            <person name="Squares S."/>
            <person name="Stevens K."/>
            <person name="Taylor K."/>
            <person name="Taylor R.G."/>
            <person name="Tivey A."/>
            <person name="Walsh S.V."/>
            <person name="Warren T."/>
            <person name="Whitehead S."/>
            <person name="Woodward J.R."/>
            <person name="Volckaert G."/>
            <person name="Aert R."/>
            <person name="Robben J."/>
            <person name="Grymonprez B."/>
            <person name="Weltjens I."/>
            <person name="Vanstreels E."/>
            <person name="Rieger M."/>
            <person name="Schaefer M."/>
            <person name="Mueller-Auer S."/>
            <person name="Gabel C."/>
            <person name="Fuchs M."/>
            <person name="Duesterhoeft A."/>
            <person name="Fritzc C."/>
            <person name="Holzer E."/>
            <person name="Moestl D."/>
            <person name="Hilbert H."/>
            <person name="Borzym K."/>
            <person name="Langer I."/>
            <person name="Beck A."/>
            <person name="Lehrach H."/>
            <person name="Reinhardt R."/>
            <person name="Pohl T.M."/>
            <person name="Eger P."/>
            <person name="Zimmermann W."/>
            <person name="Wedler H."/>
            <person name="Wambutt R."/>
            <person name="Purnelle B."/>
            <person name="Goffeau A."/>
            <person name="Cadieu E."/>
            <person name="Dreano S."/>
            <person name="Gloux S."/>
            <person name="Lelaure V."/>
            <person name="Mottier S."/>
            <person name="Galibert F."/>
            <person name="Aves S.J."/>
            <person name="Xiang Z."/>
            <person name="Hunt C."/>
            <person name="Moore K."/>
            <person name="Hurst S.M."/>
            <person name="Lucas M."/>
            <person name="Rochet M."/>
            <person name="Gaillardin C."/>
            <person name="Tallada V.A."/>
            <person name="Garzon A."/>
            <person name="Thode G."/>
            <person name="Daga R.R."/>
            <person name="Cruzado L."/>
            <person name="Jimenez J."/>
            <person name="Sanchez M."/>
            <person name="del Rey F."/>
            <person name="Benito J."/>
            <person name="Dominguez A."/>
            <person name="Revuelta J.L."/>
            <person name="Moreno S."/>
            <person name="Armstrong J."/>
            <person name="Forsburg S.L."/>
            <person name="Cerutti L."/>
            <person name="Lowe T."/>
            <person name="McCombie W.R."/>
            <person name="Paulsen I."/>
            <person name="Potashkin J."/>
            <person name="Shpakovski G.V."/>
            <person name="Ussery D."/>
            <person name="Barrell B.G."/>
            <person name="Nurse P."/>
        </authorList>
    </citation>
    <scope>NUCLEOTIDE SEQUENCE [LARGE SCALE GENOMIC DNA]</scope>
    <source>
        <strain>972 / ATCC 24843</strain>
    </source>
</reference>
<reference key="2">
    <citation type="journal article" date="2006" name="Mol. Biol. Cell">
        <title>Reconstruction of the kinetochore during meiosis in fission yeast Schizosaccharomyces pombe.</title>
        <authorList>
            <person name="Hayashi A."/>
            <person name="Asakawa H."/>
            <person name="Haraguchi T."/>
            <person name="Hiraoka Y."/>
        </authorList>
    </citation>
    <scope>SUBCELLULAR LOCATION</scope>
    <scope>FUNCTION</scope>
</reference>
<reference key="3">
    <citation type="journal article" date="2006" name="Nat. Biotechnol.">
        <title>ORFeome cloning and global analysis of protein localization in the fission yeast Schizosaccharomyces pombe.</title>
        <authorList>
            <person name="Matsuyama A."/>
            <person name="Arai R."/>
            <person name="Yashiroda Y."/>
            <person name="Shirai A."/>
            <person name="Kamata A."/>
            <person name="Sekido S."/>
            <person name="Kobayashi Y."/>
            <person name="Hashimoto A."/>
            <person name="Hamamoto M."/>
            <person name="Hiraoka Y."/>
            <person name="Horinouchi S."/>
            <person name="Yoshida M."/>
        </authorList>
    </citation>
    <scope>SUBCELLULAR LOCATION [LARGE SCALE ANALYSIS]</scope>
</reference>
<dbReference type="EMBL" id="CU329670">
    <property type="protein sequence ID" value="CAB11665.1"/>
    <property type="molecule type" value="Genomic_DNA"/>
</dbReference>
<dbReference type="PIR" id="T38317">
    <property type="entry name" value="T38317"/>
</dbReference>
<dbReference type="RefSeq" id="NP_593395.1">
    <property type="nucleotide sequence ID" value="NM_001018827.2"/>
</dbReference>
<dbReference type="SMR" id="O13952"/>
<dbReference type="BioGRID" id="278280">
    <property type="interactions" value="4"/>
</dbReference>
<dbReference type="FunCoup" id="O13952">
    <property type="interactions" value="4"/>
</dbReference>
<dbReference type="STRING" id="284812.O13952"/>
<dbReference type="iPTMnet" id="O13952"/>
<dbReference type="PaxDb" id="4896-SPAC23H4.11c.1"/>
<dbReference type="EnsemblFungi" id="SPAC23H4.11c.1">
    <property type="protein sequence ID" value="SPAC23H4.11c.1:pep"/>
    <property type="gene ID" value="SPAC23H4.11c"/>
</dbReference>
<dbReference type="GeneID" id="2541788"/>
<dbReference type="KEGG" id="spo:2541788"/>
<dbReference type="PomBase" id="SPAC23H4.11c">
    <property type="gene designation" value="cnl2"/>
</dbReference>
<dbReference type="VEuPathDB" id="FungiDB:SPAC23H4.11c"/>
<dbReference type="eggNOG" id="ENOG502R7FC">
    <property type="taxonomic scope" value="Eukaryota"/>
</dbReference>
<dbReference type="HOGENOM" id="CLU_1441820_0_0_1"/>
<dbReference type="InParanoid" id="O13952"/>
<dbReference type="OMA" id="KNERDQM"/>
<dbReference type="PhylomeDB" id="O13952"/>
<dbReference type="PRO" id="PR:O13952"/>
<dbReference type="Proteomes" id="UP000002485">
    <property type="component" value="Chromosome I"/>
</dbReference>
<dbReference type="GO" id="GO:0000779">
    <property type="term" value="C:condensed chromosome, centromeric region"/>
    <property type="evidence" value="ECO:0000314"/>
    <property type="project" value="PomBase"/>
</dbReference>
<dbReference type="GO" id="GO:0005829">
    <property type="term" value="C:cytosol"/>
    <property type="evidence" value="ECO:0007005"/>
    <property type="project" value="PomBase"/>
</dbReference>
<dbReference type="GO" id="GO:0031511">
    <property type="term" value="C:Mis6-Sim4 complex"/>
    <property type="evidence" value="ECO:0000314"/>
    <property type="project" value="PomBase"/>
</dbReference>
<dbReference type="GO" id="GO:0005634">
    <property type="term" value="C:nucleus"/>
    <property type="evidence" value="ECO:0007005"/>
    <property type="project" value="PomBase"/>
</dbReference>
<dbReference type="GO" id="GO:0051301">
    <property type="term" value="P:cell division"/>
    <property type="evidence" value="ECO:0007669"/>
    <property type="project" value="UniProtKB-KW"/>
</dbReference>
<dbReference type="GO" id="GO:0007059">
    <property type="term" value="P:chromosome segregation"/>
    <property type="evidence" value="ECO:0000318"/>
    <property type="project" value="GO_Central"/>
</dbReference>
<dbReference type="GO" id="GO:0000070">
    <property type="term" value="P:mitotic sister chromatid segregation"/>
    <property type="evidence" value="ECO:0000305"/>
    <property type="project" value="PomBase"/>
</dbReference>
<dbReference type="InterPro" id="IPR018565">
    <property type="entry name" value="Nkp2/Cnl2"/>
</dbReference>
<dbReference type="PANTHER" id="PTHR28064">
    <property type="entry name" value="INNER KINETOCHORE SUBUNIT NKP2"/>
    <property type="match status" value="1"/>
</dbReference>
<dbReference type="PANTHER" id="PTHR28064:SF1">
    <property type="entry name" value="INNER KINETOCHORE SUBUNIT NKP2"/>
    <property type="match status" value="1"/>
</dbReference>
<dbReference type="Pfam" id="PF09447">
    <property type="entry name" value="Cnl2_NKP2"/>
    <property type="match status" value="1"/>
</dbReference>